<feature type="chain" id="PRO_0000114091" description="Glutamyl-tRNA reductase">
    <location>
        <begin position="1"/>
        <end position="432"/>
    </location>
</feature>
<feature type="region of interest" description="Disordered" evidence="2">
    <location>
        <begin position="408"/>
        <end position="432"/>
    </location>
</feature>
<feature type="active site" description="Nucleophile" evidence="1">
    <location>
        <position position="50"/>
    </location>
</feature>
<feature type="binding site" evidence="1">
    <location>
        <begin position="49"/>
        <end position="52"/>
    </location>
    <ligand>
        <name>substrate</name>
    </ligand>
</feature>
<feature type="binding site" evidence="1">
    <location>
        <position position="101"/>
    </location>
    <ligand>
        <name>substrate</name>
    </ligand>
</feature>
<feature type="binding site" evidence="1">
    <location>
        <begin position="106"/>
        <end position="108"/>
    </location>
    <ligand>
        <name>substrate</name>
    </ligand>
</feature>
<feature type="binding site" evidence="1">
    <location>
        <position position="112"/>
    </location>
    <ligand>
        <name>substrate</name>
    </ligand>
</feature>
<feature type="binding site" evidence="1">
    <location>
        <begin position="181"/>
        <end position="186"/>
    </location>
    <ligand>
        <name>NADP(+)</name>
        <dbReference type="ChEBI" id="CHEBI:58349"/>
    </ligand>
</feature>
<feature type="site" description="Important for activity" evidence="1">
    <location>
        <position position="91"/>
    </location>
</feature>
<evidence type="ECO:0000255" key="1">
    <source>
        <dbReference type="HAMAP-Rule" id="MF_00087"/>
    </source>
</evidence>
<evidence type="ECO:0000256" key="2">
    <source>
        <dbReference type="SAM" id="MobiDB-lite"/>
    </source>
</evidence>
<dbReference type="EC" id="1.2.1.70" evidence="1"/>
<dbReference type="EMBL" id="AE008922">
    <property type="protein sequence ID" value="AAM40183.1"/>
    <property type="molecule type" value="Genomic_DNA"/>
</dbReference>
<dbReference type="RefSeq" id="NP_636259.1">
    <property type="nucleotide sequence ID" value="NC_003902.1"/>
</dbReference>
<dbReference type="RefSeq" id="WP_011036104.1">
    <property type="nucleotide sequence ID" value="NC_003902.1"/>
</dbReference>
<dbReference type="SMR" id="Q8PC67"/>
<dbReference type="STRING" id="190485.XCC0868"/>
<dbReference type="EnsemblBacteria" id="AAM40183">
    <property type="protein sequence ID" value="AAM40183"/>
    <property type="gene ID" value="XCC0868"/>
</dbReference>
<dbReference type="KEGG" id="xcc:XCC0868"/>
<dbReference type="PATRIC" id="fig|190485.4.peg.944"/>
<dbReference type="eggNOG" id="COG0373">
    <property type="taxonomic scope" value="Bacteria"/>
</dbReference>
<dbReference type="HOGENOM" id="CLU_035113_2_2_6"/>
<dbReference type="OrthoDB" id="110209at2"/>
<dbReference type="UniPathway" id="UPA00251">
    <property type="reaction ID" value="UER00316"/>
</dbReference>
<dbReference type="Proteomes" id="UP000001010">
    <property type="component" value="Chromosome"/>
</dbReference>
<dbReference type="GO" id="GO:0008883">
    <property type="term" value="F:glutamyl-tRNA reductase activity"/>
    <property type="evidence" value="ECO:0000318"/>
    <property type="project" value="GO_Central"/>
</dbReference>
<dbReference type="GO" id="GO:0050661">
    <property type="term" value="F:NADP binding"/>
    <property type="evidence" value="ECO:0007669"/>
    <property type="project" value="InterPro"/>
</dbReference>
<dbReference type="GO" id="GO:0019353">
    <property type="term" value="P:protoporphyrinogen IX biosynthetic process from glutamate"/>
    <property type="evidence" value="ECO:0000318"/>
    <property type="project" value="GO_Central"/>
</dbReference>
<dbReference type="CDD" id="cd05213">
    <property type="entry name" value="NAD_bind_Glutamyl_tRNA_reduct"/>
    <property type="match status" value="1"/>
</dbReference>
<dbReference type="FunFam" id="3.30.460.30:FF:000001">
    <property type="entry name" value="Glutamyl-tRNA reductase"/>
    <property type="match status" value="1"/>
</dbReference>
<dbReference type="FunFam" id="3.40.50.720:FF:000031">
    <property type="entry name" value="Glutamyl-tRNA reductase"/>
    <property type="match status" value="1"/>
</dbReference>
<dbReference type="Gene3D" id="3.30.460.30">
    <property type="entry name" value="Glutamyl-tRNA reductase, N-terminal domain"/>
    <property type="match status" value="1"/>
</dbReference>
<dbReference type="Gene3D" id="3.40.50.720">
    <property type="entry name" value="NAD(P)-binding Rossmann-like Domain"/>
    <property type="match status" value="1"/>
</dbReference>
<dbReference type="HAMAP" id="MF_00087">
    <property type="entry name" value="Glu_tRNA_reductase"/>
    <property type="match status" value="1"/>
</dbReference>
<dbReference type="InterPro" id="IPR000343">
    <property type="entry name" value="4pyrrol_synth_GluRdtase"/>
</dbReference>
<dbReference type="InterPro" id="IPR015896">
    <property type="entry name" value="4pyrrol_synth_GluRdtase_dimer"/>
</dbReference>
<dbReference type="InterPro" id="IPR015895">
    <property type="entry name" value="4pyrrol_synth_GluRdtase_N"/>
</dbReference>
<dbReference type="InterPro" id="IPR018214">
    <property type="entry name" value="GluRdtase_CS"/>
</dbReference>
<dbReference type="InterPro" id="IPR036453">
    <property type="entry name" value="GluRdtase_dimer_dom_sf"/>
</dbReference>
<dbReference type="InterPro" id="IPR036343">
    <property type="entry name" value="GluRdtase_N_sf"/>
</dbReference>
<dbReference type="InterPro" id="IPR036291">
    <property type="entry name" value="NAD(P)-bd_dom_sf"/>
</dbReference>
<dbReference type="InterPro" id="IPR006151">
    <property type="entry name" value="Shikm_DH/Glu-tRNA_Rdtase"/>
</dbReference>
<dbReference type="NCBIfam" id="TIGR01035">
    <property type="entry name" value="hemA"/>
    <property type="match status" value="1"/>
</dbReference>
<dbReference type="PANTHER" id="PTHR43013">
    <property type="entry name" value="GLUTAMYL-TRNA REDUCTASE"/>
    <property type="match status" value="1"/>
</dbReference>
<dbReference type="PANTHER" id="PTHR43013:SF1">
    <property type="entry name" value="GLUTAMYL-TRNA REDUCTASE"/>
    <property type="match status" value="1"/>
</dbReference>
<dbReference type="Pfam" id="PF00745">
    <property type="entry name" value="GlutR_dimer"/>
    <property type="match status" value="1"/>
</dbReference>
<dbReference type="Pfam" id="PF05201">
    <property type="entry name" value="GlutR_N"/>
    <property type="match status" value="1"/>
</dbReference>
<dbReference type="Pfam" id="PF01488">
    <property type="entry name" value="Shikimate_DH"/>
    <property type="match status" value="1"/>
</dbReference>
<dbReference type="PIRSF" id="PIRSF000445">
    <property type="entry name" value="4pyrrol_synth_GluRdtase"/>
    <property type="match status" value="1"/>
</dbReference>
<dbReference type="SUPFAM" id="SSF69742">
    <property type="entry name" value="Glutamyl tRNA-reductase catalytic, N-terminal domain"/>
    <property type="match status" value="1"/>
</dbReference>
<dbReference type="SUPFAM" id="SSF69075">
    <property type="entry name" value="Glutamyl tRNA-reductase dimerization domain"/>
    <property type="match status" value="1"/>
</dbReference>
<dbReference type="SUPFAM" id="SSF51735">
    <property type="entry name" value="NAD(P)-binding Rossmann-fold domains"/>
    <property type="match status" value="1"/>
</dbReference>
<dbReference type="PROSITE" id="PS00747">
    <property type="entry name" value="GLUTR"/>
    <property type="match status" value="1"/>
</dbReference>
<comment type="function">
    <text evidence="1">Catalyzes the NADPH-dependent reduction of glutamyl-tRNA(Glu) to glutamate 1-semialdehyde (GSA).</text>
</comment>
<comment type="catalytic activity">
    <reaction evidence="1">
        <text>(S)-4-amino-5-oxopentanoate + tRNA(Glu) + NADP(+) = L-glutamyl-tRNA(Glu) + NADPH + H(+)</text>
        <dbReference type="Rhea" id="RHEA:12344"/>
        <dbReference type="Rhea" id="RHEA-COMP:9663"/>
        <dbReference type="Rhea" id="RHEA-COMP:9680"/>
        <dbReference type="ChEBI" id="CHEBI:15378"/>
        <dbReference type="ChEBI" id="CHEBI:57501"/>
        <dbReference type="ChEBI" id="CHEBI:57783"/>
        <dbReference type="ChEBI" id="CHEBI:58349"/>
        <dbReference type="ChEBI" id="CHEBI:78442"/>
        <dbReference type="ChEBI" id="CHEBI:78520"/>
        <dbReference type="EC" id="1.2.1.70"/>
    </reaction>
</comment>
<comment type="pathway">
    <text evidence="1">Porphyrin-containing compound metabolism; protoporphyrin-IX biosynthesis; 5-aminolevulinate from L-glutamyl-tRNA(Glu): step 1/2.</text>
</comment>
<comment type="subunit">
    <text evidence="1">Homodimer.</text>
</comment>
<comment type="domain">
    <text evidence="1">Possesses an unusual extended V-shaped dimeric structure with each monomer consisting of three distinct domains arranged along a curved 'spinal' alpha-helix. The N-terminal catalytic domain specifically recognizes the glutamate moiety of the substrate. The second domain is the NADPH-binding domain, and the third C-terminal domain is responsible for dimerization.</text>
</comment>
<comment type="miscellaneous">
    <text evidence="1">During catalysis, the active site Cys acts as a nucleophile attacking the alpha-carbonyl group of tRNA-bound glutamate with the formation of a thioester intermediate between enzyme and glutamate, and the concomitant release of tRNA(Glu). The thioester intermediate is finally reduced by direct hydride transfer from NADPH, to form the product GSA.</text>
</comment>
<comment type="similarity">
    <text evidence="1">Belongs to the glutamyl-tRNA reductase family.</text>
</comment>
<organism>
    <name type="scientific">Xanthomonas campestris pv. campestris (strain ATCC 33913 / DSM 3586 / NCPPB 528 / LMG 568 / P 25)</name>
    <dbReference type="NCBI Taxonomy" id="190485"/>
    <lineage>
        <taxon>Bacteria</taxon>
        <taxon>Pseudomonadati</taxon>
        <taxon>Pseudomonadota</taxon>
        <taxon>Gammaproteobacteria</taxon>
        <taxon>Lysobacterales</taxon>
        <taxon>Lysobacteraceae</taxon>
        <taxon>Xanthomonas</taxon>
    </lineage>
</organism>
<accession>Q8PC67</accession>
<gene>
    <name evidence="1" type="primary">hemA</name>
    <name type="ordered locus">XCC0868</name>
</gene>
<reference key="1">
    <citation type="journal article" date="2002" name="Nature">
        <title>Comparison of the genomes of two Xanthomonas pathogens with differing host specificities.</title>
        <authorList>
            <person name="da Silva A.C.R."/>
            <person name="Ferro J.A."/>
            <person name="Reinach F.C."/>
            <person name="Farah C.S."/>
            <person name="Furlan L.R."/>
            <person name="Quaggio R.B."/>
            <person name="Monteiro-Vitorello C.B."/>
            <person name="Van Sluys M.A."/>
            <person name="Almeida N.F. Jr."/>
            <person name="Alves L.M.C."/>
            <person name="do Amaral A.M."/>
            <person name="Bertolini M.C."/>
            <person name="Camargo L.E.A."/>
            <person name="Camarotte G."/>
            <person name="Cannavan F."/>
            <person name="Cardozo J."/>
            <person name="Chambergo F."/>
            <person name="Ciapina L.P."/>
            <person name="Cicarelli R.M.B."/>
            <person name="Coutinho L.L."/>
            <person name="Cursino-Santos J.R."/>
            <person name="El-Dorry H."/>
            <person name="Faria J.B."/>
            <person name="Ferreira A.J.S."/>
            <person name="Ferreira R.C.C."/>
            <person name="Ferro M.I.T."/>
            <person name="Formighieri E.F."/>
            <person name="Franco M.C."/>
            <person name="Greggio C.C."/>
            <person name="Gruber A."/>
            <person name="Katsuyama A.M."/>
            <person name="Kishi L.T."/>
            <person name="Leite R.P."/>
            <person name="Lemos E.G.M."/>
            <person name="Lemos M.V.F."/>
            <person name="Locali E.C."/>
            <person name="Machado M.A."/>
            <person name="Madeira A.M.B.N."/>
            <person name="Martinez-Rossi N.M."/>
            <person name="Martins E.C."/>
            <person name="Meidanis J."/>
            <person name="Menck C.F.M."/>
            <person name="Miyaki C.Y."/>
            <person name="Moon D.H."/>
            <person name="Moreira L.M."/>
            <person name="Novo M.T.M."/>
            <person name="Okura V.K."/>
            <person name="Oliveira M.C."/>
            <person name="Oliveira V.R."/>
            <person name="Pereira H.A."/>
            <person name="Rossi A."/>
            <person name="Sena J.A.D."/>
            <person name="Silva C."/>
            <person name="de Souza R.F."/>
            <person name="Spinola L.A.F."/>
            <person name="Takita M.A."/>
            <person name="Tamura R.E."/>
            <person name="Teixeira E.C."/>
            <person name="Tezza R.I.D."/>
            <person name="Trindade dos Santos M."/>
            <person name="Truffi D."/>
            <person name="Tsai S.M."/>
            <person name="White F.F."/>
            <person name="Setubal J.C."/>
            <person name="Kitajima J.P."/>
        </authorList>
    </citation>
    <scope>NUCLEOTIDE SEQUENCE [LARGE SCALE GENOMIC DNA]</scope>
    <source>
        <strain>ATCC 33913 / DSM 3586 / NCPPB 528 / LMG 568 / P 25</strain>
    </source>
</reference>
<name>HEM1_XANCP</name>
<sequence length="432" mass="47377">MTLWVLGLNHQTAPVDLRERAAFAGDALPRALDSLRILPQVREAALLSTCNRTELYAMADDPQTLVAWLDMHAPGLSGYLYQHRDAEAVRHLFRVATGLDSMVLGEPQILGQVKDAWAVARAHGALGSGLDRLFQQTFSVAKRARTDTRVGANPVSVASTAVRLAQESFARLNESTVLLVGAGETIELAAKHLSEGRVRRLLIANRTLAHAQTLATQHGGVALPLTELDRHLAEADVVFSATAAREPVVTRVQVEQALRTRKRKPMLLFDLAVPRDIEASVAELSDAYLYTVDDLERAVEDNRRSRREAADQAEAIIDLQVARYVETLQANERQAPLKRLRAFGDSTRDELLAKARQQLSNGKPADEVLEQLAHALTNRLLHPPTAALRDAALNNDLDLTSAADRLFPEKPGYRHPPVATPIVRTDDANPAP</sequence>
<proteinExistence type="inferred from homology"/>
<keyword id="KW-0521">NADP</keyword>
<keyword id="KW-0560">Oxidoreductase</keyword>
<keyword id="KW-0627">Porphyrin biosynthesis</keyword>
<keyword id="KW-1185">Reference proteome</keyword>
<protein>
    <recommendedName>
        <fullName evidence="1">Glutamyl-tRNA reductase</fullName>
        <shortName evidence="1">GluTR</shortName>
        <ecNumber evidence="1">1.2.1.70</ecNumber>
    </recommendedName>
</protein>